<proteinExistence type="inferred from homology"/>
<dbReference type="EMBL" id="BX284602">
    <property type="protein sequence ID" value="CAB04134.2"/>
    <property type="molecule type" value="Genomic_DNA"/>
</dbReference>
<dbReference type="PIR" id="T21081">
    <property type="entry name" value="T21081"/>
</dbReference>
<dbReference type="RefSeq" id="NP_496772.2">
    <property type="nucleotide sequence ID" value="NM_064371.6"/>
</dbReference>
<dbReference type="FunCoup" id="O01323">
    <property type="interactions" value="1102"/>
</dbReference>
<dbReference type="PaxDb" id="6239-F18A11.3"/>
<dbReference type="PeptideAtlas" id="O01323"/>
<dbReference type="EnsemblMetazoa" id="F18A11.3.1">
    <property type="protein sequence ID" value="F18A11.3.1"/>
    <property type="gene ID" value="WBGene00008930"/>
</dbReference>
<dbReference type="GeneID" id="174946"/>
<dbReference type="KEGG" id="cel:CELE_F18A11.3"/>
<dbReference type="UCSC" id="F18A11.3">
    <property type="organism name" value="c. elegans"/>
</dbReference>
<dbReference type="AGR" id="WB:WBGene00008930"/>
<dbReference type="CTD" id="174946"/>
<dbReference type="WormBase" id="F18A11.3">
    <property type="protein sequence ID" value="CE54209"/>
    <property type="gene ID" value="WBGene00008930"/>
</dbReference>
<dbReference type="eggNOG" id="ENOG502SDMH">
    <property type="taxonomic scope" value="Eukaryota"/>
</dbReference>
<dbReference type="HOGENOM" id="CLU_2624360_0_0_1"/>
<dbReference type="InParanoid" id="O01323"/>
<dbReference type="OrthoDB" id="10062823at2759"/>
<dbReference type="PRO" id="PR:O01323"/>
<dbReference type="Proteomes" id="UP000001940">
    <property type="component" value="Chromosome II"/>
</dbReference>
<dbReference type="Bgee" id="WBGene00008930">
    <property type="expression patterns" value="Expressed in pharyngeal muscle cell (C elegans) and 4 other cell types or tissues"/>
</dbReference>
<dbReference type="GO" id="GO:0005886">
    <property type="term" value="C:plasma membrane"/>
    <property type="evidence" value="ECO:0007669"/>
    <property type="project" value="UniProtKB-SubCell"/>
</dbReference>
<dbReference type="InterPro" id="IPR026776">
    <property type="entry name" value="UPF0729_C18orf32-like"/>
</dbReference>
<dbReference type="PANTHER" id="PTHR13456">
    <property type="entry name" value="UPF0729 PROTEIN C18ORF32"/>
    <property type="match status" value="1"/>
</dbReference>
<dbReference type="PANTHER" id="PTHR13456:SF0">
    <property type="entry name" value="UPF0729 PROTEIN C18ORF32"/>
    <property type="match status" value="1"/>
</dbReference>
<reference key="1">
    <citation type="journal article" date="1998" name="Science">
        <title>Genome sequence of the nematode C. elegans: a platform for investigating biology.</title>
        <authorList>
            <consortium name="The C. elegans sequencing consortium"/>
        </authorList>
    </citation>
    <scope>NUCLEOTIDE SEQUENCE [LARGE SCALE GENOMIC DNA]</scope>
    <source>
        <strain>Bristol N2</strain>
    </source>
</reference>
<gene>
    <name evidence="3" type="ORF">F18A11.3</name>
</gene>
<accession>O01323</accession>
<evidence type="ECO:0000255" key="1"/>
<evidence type="ECO:0000305" key="2"/>
<evidence type="ECO:0000312" key="3">
    <source>
        <dbReference type="WormBase" id="F18A11.3"/>
    </source>
</evidence>
<organism>
    <name type="scientific">Caenorhabditis elegans</name>
    <dbReference type="NCBI Taxonomy" id="6239"/>
    <lineage>
        <taxon>Eukaryota</taxon>
        <taxon>Metazoa</taxon>
        <taxon>Ecdysozoa</taxon>
        <taxon>Nematoda</taxon>
        <taxon>Chromadorea</taxon>
        <taxon>Rhabditida</taxon>
        <taxon>Rhabditina</taxon>
        <taxon>Rhabditomorpha</taxon>
        <taxon>Rhabditoidea</taxon>
        <taxon>Rhabditidae</taxon>
        <taxon>Peloderinae</taxon>
        <taxon>Caenorhabditis</taxon>
    </lineage>
</organism>
<keyword id="KW-1003">Cell membrane</keyword>
<keyword id="KW-0472">Membrane</keyword>
<keyword id="KW-1185">Reference proteome</keyword>
<keyword id="KW-0812">Transmembrane</keyword>
<keyword id="KW-1133">Transmembrane helix</keyword>
<comment type="subcellular location">
    <subcellularLocation>
        <location evidence="1">Cell membrane</location>
        <topology evidence="1">Single-pass membrane protein</topology>
    </subcellularLocation>
</comment>
<comment type="similarity">
    <text evidence="2">Belongs to the UPF0729 family.</text>
</comment>
<protein>
    <recommendedName>
        <fullName>UPF0729 protein F18A11.3</fullName>
    </recommendedName>
</protein>
<feature type="chain" id="PRO_0000390361" description="UPF0729 protein F18A11.3">
    <location>
        <begin position="1"/>
        <end position="84"/>
    </location>
</feature>
<feature type="transmembrane region" description="Helical" evidence="1">
    <location>
        <begin position="1"/>
        <end position="21"/>
    </location>
</feature>
<name>U729_CAEEL</name>
<sequence>MVCLPCIFLPIMMAIYMKFIMPYVYRVLPQRWVNFLDPILYPTCPVKIPEPENKKEVEEEKKDAPCCANTTEATVETVETKKDQ</sequence>